<sequence>MSISLNYSATRDPLSALGLDVGNRRIGVAGSDRLGLLATGLGVIQRRSLSEDIAQVQEWIRRRQATVVVVGIPLLADGSVGSQARKVQRFVRALQVAVDLPIVTVNEYLSTAQAEWDLREAGIPAKAQKGLIDQQSAAVILQTWLDERRASLSEVPAWQSWGNKDYAGEV</sequence>
<evidence type="ECO:0000255" key="1">
    <source>
        <dbReference type="HAMAP-Rule" id="MF_00651"/>
    </source>
</evidence>
<feature type="chain" id="PRO_0000257607" description="Putative pre-16S rRNA nuclease">
    <location>
        <begin position="1"/>
        <end position="170"/>
    </location>
</feature>
<reference key="1">
    <citation type="journal article" date="2007" name="ISME J.">
        <title>Population level functional diversity in a microbial community revealed by comparative genomic and metagenomic analyses.</title>
        <authorList>
            <person name="Bhaya D."/>
            <person name="Grossman A.R."/>
            <person name="Steunou A.-S."/>
            <person name="Khuri N."/>
            <person name="Cohan F.M."/>
            <person name="Hamamura N."/>
            <person name="Melendrez M.C."/>
            <person name="Bateson M.M."/>
            <person name="Ward D.M."/>
            <person name="Heidelberg J.F."/>
        </authorList>
    </citation>
    <scope>NUCLEOTIDE SEQUENCE [LARGE SCALE GENOMIC DNA]</scope>
    <source>
        <strain>JA-2-3B'a(2-13)</strain>
    </source>
</reference>
<accession>Q2JKS4</accession>
<keyword id="KW-0963">Cytoplasm</keyword>
<keyword id="KW-0378">Hydrolase</keyword>
<keyword id="KW-0540">Nuclease</keyword>
<keyword id="KW-1185">Reference proteome</keyword>
<keyword id="KW-0690">Ribosome biogenesis</keyword>
<gene>
    <name type="ordered locus">CYB_1750</name>
</gene>
<protein>
    <recommendedName>
        <fullName evidence="1">Putative pre-16S rRNA nuclease</fullName>
        <ecNumber evidence="1">3.1.-.-</ecNumber>
    </recommendedName>
</protein>
<comment type="function">
    <text evidence="1">Could be a nuclease involved in processing of the 5'-end of pre-16S rRNA.</text>
</comment>
<comment type="subcellular location">
    <subcellularLocation>
        <location evidence="1">Cytoplasm</location>
    </subcellularLocation>
</comment>
<comment type="similarity">
    <text evidence="1">Belongs to the YqgF nuclease family.</text>
</comment>
<name>YQGF_SYNJB</name>
<proteinExistence type="inferred from homology"/>
<dbReference type="EC" id="3.1.-.-" evidence="1"/>
<dbReference type="EMBL" id="CP000240">
    <property type="protein sequence ID" value="ABD02707.1"/>
    <property type="molecule type" value="Genomic_DNA"/>
</dbReference>
<dbReference type="SMR" id="Q2JKS4"/>
<dbReference type="STRING" id="321332.CYB_1750"/>
<dbReference type="KEGG" id="cyb:CYB_1750"/>
<dbReference type="eggNOG" id="COG0816">
    <property type="taxonomic scope" value="Bacteria"/>
</dbReference>
<dbReference type="HOGENOM" id="CLU_098240_3_1_3"/>
<dbReference type="OrthoDB" id="9796140at2"/>
<dbReference type="Proteomes" id="UP000001938">
    <property type="component" value="Chromosome"/>
</dbReference>
<dbReference type="GO" id="GO:0005829">
    <property type="term" value="C:cytosol"/>
    <property type="evidence" value="ECO:0007669"/>
    <property type="project" value="TreeGrafter"/>
</dbReference>
<dbReference type="GO" id="GO:0004518">
    <property type="term" value="F:nuclease activity"/>
    <property type="evidence" value="ECO:0007669"/>
    <property type="project" value="UniProtKB-KW"/>
</dbReference>
<dbReference type="GO" id="GO:0000967">
    <property type="term" value="P:rRNA 5'-end processing"/>
    <property type="evidence" value="ECO:0007669"/>
    <property type="project" value="UniProtKB-UniRule"/>
</dbReference>
<dbReference type="CDD" id="cd16964">
    <property type="entry name" value="YqgF"/>
    <property type="match status" value="1"/>
</dbReference>
<dbReference type="Gene3D" id="3.30.420.140">
    <property type="entry name" value="YqgF/RNase H-like domain"/>
    <property type="match status" value="1"/>
</dbReference>
<dbReference type="HAMAP" id="MF_00651">
    <property type="entry name" value="Nuclease_YqgF"/>
    <property type="match status" value="1"/>
</dbReference>
<dbReference type="InterPro" id="IPR012337">
    <property type="entry name" value="RNaseH-like_sf"/>
</dbReference>
<dbReference type="InterPro" id="IPR005227">
    <property type="entry name" value="YqgF"/>
</dbReference>
<dbReference type="InterPro" id="IPR006641">
    <property type="entry name" value="YqgF/RNaseH-like_dom"/>
</dbReference>
<dbReference type="InterPro" id="IPR037027">
    <property type="entry name" value="YqgF/RNaseH-like_dom_sf"/>
</dbReference>
<dbReference type="NCBIfam" id="TIGR00250">
    <property type="entry name" value="RNAse_H_YqgF"/>
    <property type="match status" value="1"/>
</dbReference>
<dbReference type="PANTHER" id="PTHR33317">
    <property type="entry name" value="POLYNUCLEOTIDYL TRANSFERASE, RIBONUCLEASE H-LIKE SUPERFAMILY PROTEIN"/>
    <property type="match status" value="1"/>
</dbReference>
<dbReference type="PANTHER" id="PTHR33317:SF4">
    <property type="entry name" value="POLYNUCLEOTIDYL TRANSFERASE, RIBONUCLEASE H-LIKE SUPERFAMILY PROTEIN"/>
    <property type="match status" value="1"/>
</dbReference>
<dbReference type="Pfam" id="PF03652">
    <property type="entry name" value="RuvX"/>
    <property type="match status" value="1"/>
</dbReference>
<dbReference type="SMART" id="SM00732">
    <property type="entry name" value="YqgFc"/>
    <property type="match status" value="1"/>
</dbReference>
<dbReference type="SUPFAM" id="SSF53098">
    <property type="entry name" value="Ribonuclease H-like"/>
    <property type="match status" value="1"/>
</dbReference>
<organism>
    <name type="scientific">Synechococcus sp. (strain JA-2-3B'a(2-13))</name>
    <name type="common">Cyanobacteria bacterium Yellowstone B-Prime</name>
    <dbReference type="NCBI Taxonomy" id="321332"/>
    <lineage>
        <taxon>Bacteria</taxon>
        <taxon>Bacillati</taxon>
        <taxon>Cyanobacteriota</taxon>
        <taxon>Cyanophyceae</taxon>
        <taxon>Synechococcales</taxon>
        <taxon>Synechococcaceae</taxon>
        <taxon>Synechococcus</taxon>
    </lineage>
</organism>